<keyword id="KW-0963">Cytoplasm</keyword>
<keyword id="KW-0690">Ribosome biogenesis</keyword>
<protein>
    <recommendedName>
        <fullName evidence="1">Ribosome-binding factor A</fullName>
    </recommendedName>
</protein>
<sequence length="132" mass="15066">MSRKRTSPNRNVQIADQIQRDLSELIMREVKDPRIGIVTIQSVELTPDYAHAKIYFTALTGDPDKTQEALNHASGHLHNLLFKRLHIHTVPTLHFHYDQTIEKAVEMSRLIKEANSTRAKDDDEADAPAKDD</sequence>
<dbReference type="EMBL" id="CP001025">
    <property type="protein sequence ID" value="ACB63911.1"/>
    <property type="molecule type" value="Genomic_DNA"/>
</dbReference>
<dbReference type="RefSeq" id="WP_006752288.1">
    <property type="nucleotide sequence ID" value="NC_010551.1"/>
</dbReference>
<dbReference type="SMR" id="B1YP37"/>
<dbReference type="GeneID" id="93083216"/>
<dbReference type="KEGG" id="bac:BamMC406_1423"/>
<dbReference type="HOGENOM" id="CLU_089475_5_1_4"/>
<dbReference type="OrthoDB" id="307788at2"/>
<dbReference type="Proteomes" id="UP000001680">
    <property type="component" value="Chromosome 1"/>
</dbReference>
<dbReference type="GO" id="GO:0005829">
    <property type="term" value="C:cytosol"/>
    <property type="evidence" value="ECO:0007669"/>
    <property type="project" value="TreeGrafter"/>
</dbReference>
<dbReference type="GO" id="GO:0043024">
    <property type="term" value="F:ribosomal small subunit binding"/>
    <property type="evidence" value="ECO:0007669"/>
    <property type="project" value="TreeGrafter"/>
</dbReference>
<dbReference type="GO" id="GO:0030490">
    <property type="term" value="P:maturation of SSU-rRNA"/>
    <property type="evidence" value="ECO:0007669"/>
    <property type="project" value="UniProtKB-UniRule"/>
</dbReference>
<dbReference type="Gene3D" id="3.30.300.20">
    <property type="match status" value="1"/>
</dbReference>
<dbReference type="HAMAP" id="MF_00003">
    <property type="entry name" value="RbfA"/>
    <property type="match status" value="1"/>
</dbReference>
<dbReference type="InterPro" id="IPR015946">
    <property type="entry name" value="KH_dom-like_a/b"/>
</dbReference>
<dbReference type="InterPro" id="IPR000238">
    <property type="entry name" value="RbfA"/>
</dbReference>
<dbReference type="InterPro" id="IPR023799">
    <property type="entry name" value="RbfA_dom_sf"/>
</dbReference>
<dbReference type="NCBIfam" id="TIGR00082">
    <property type="entry name" value="rbfA"/>
    <property type="match status" value="1"/>
</dbReference>
<dbReference type="PANTHER" id="PTHR33515">
    <property type="entry name" value="RIBOSOME-BINDING FACTOR A, CHLOROPLASTIC-RELATED"/>
    <property type="match status" value="1"/>
</dbReference>
<dbReference type="PANTHER" id="PTHR33515:SF1">
    <property type="entry name" value="RIBOSOME-BINDING FACTOR A, CHLOROPLASTIC-RELATED"/>
    <property type="match status" value="1"/>
</dbReference>
<dbReference type="Pfam" id="PF02033">
    <property type="entry name" value="RBFA"/>
    <property type="match status" value="1"/>
</dbReference>
<dbReference type="SUPFAM" id="SSF89919">
    <property type="entry name" value="Ribosome-binding factor A, RbfA"/>
    <property type="match status" value="1"/>
</dbReference>
<evidence type="ECO:0000255" key="1">
    <source>
        <dbReference type="HAMAP-Rule" id="MF_00003"/>
    </source>
</evidence>
<evidence type="ECO:0000256" key="2">
    <source>
        <dbReference type="SAM" id="MobiDB-lite"/>
    </source>
</evidence>
<reference key="1">
    <citation type="submission" date="2008-04" db="EMBL/GenBank/DDBJ databases">
        <title>Complete sequence of chromosome 1 of Burkholderia ambifaria MC40-6.</title>
        <authorList>
            <person name="Copeland A."/>
            <person name="Lucas S."/>
            <person name="Lapidus A."/>
            <person name="Glavina del Rio T."/>
            <person name="Dalin E."/>
            <person name="Tice H."/>
            <person name="Pitluck S."/>
            <person name="Chain P."/>
            <person name="Malfatti S."/>
            <person name="Shin M."/>
            <person name="Vergez L."/>
            <person name="Lang D."/>
            <person name="Schmutz J."/>
            <person name="Larimer F."/>
            <person name="Land M."/>
            <person name="Hauser L."/>
            <person name="Kyrpides N."/>
            <person name="Lykidis A."/>
            <person name="Ramette A."/>
            <person name="Konstantinidis K."/>
            <person name="Tiedje J."/>
            <person name="Richardson P."/>
        </authorList>
    </citation>
    <scope>NUCLEOTIDE SEQUENCE [LARGE SCALE GENOMIC DNA]</scope>
    <source>
        <strain>MC40-6</strain>
    </source>
</reference>
<feature type="chain" id="PRO_1000088862" description="Ribosome-binding factor A">
    <location>
        <begin position="1"/>
        <end position="132"/>
    </location>
</feature>
<feature type="region of interest" description="Disordered" evidence="2">
    <location>
        <begin position="113"/>
        <end position="132"/>
    </location>
</feature>
<gene>
    <name evidence="1" type="primary">rbfA</name>
    <name type="ordered locus">BamMC406_1423</name>
</gene>
<accession>B1YP37</accession>
<organism>
    <name type="scientific">Burkholderia ambifaria (strain MC40-6)</name>
    <dbReference type="NCBI Taxonomy" id="398577"/>
    <lineage>
        <taxon>Bacteria</taxon>
        <taxon>Pseudomonadati</taxon>
        <taxon>Pseudomonadota</taxon>
        <taxon>Betaproteobacteria</taxon>
        <taxon>Burkholderiales</taxon>
        <taxon>Burkholderiaceae</taxon>
        <taxon>Burkholderia</taxon>
        <taxon>Burkholderia cepacia complex</taxon>
    </lineage>
</organism>
<name>RBFA_BURA4</name>
<proteinExistence type="inferred from homology"/>
<comment type="function">
    <text evidence="1">One of several proteins that assist in the late maturation steps of the functional core of the 30S ribosomal subunit. Associates with free 30S ribosomal subunits (but not with 30S subunits that are part of 70S ribosomes or polysomes). Required for efficient processing of 16S rRNA. May interact with the 5'-terminal helix region of 16S rRNA.</text>
</comment>
<comment type="subunit">
    <text evidence="1">Monomer. Binds 30S ribosomal subunits, but not 50S ribosomal subunits or 70S ribosomes.</text>
</comment>
<comment type="subcellular location">
    <subcellularLocation>
        <location evidence="1">Cytoplasm</location>
    </subcellularLocation>
</comment>
<comment type="similarity">
    <text evidence="1">Belongs to the RbfA family.</text>
</comment>